<sequence length="403" mass="45461">MSDLSPERFKLAVTSPSSIPESSSALQLHHSYSRKQKSLGLLCTNFLALYNREGIEMVGLDDAASKLGVERRRIYDIVNVLESVGVLTRRAKNQYTWKGFSAIPGALKELQEEGVKDTFHRFYVNENVKGSDDEDDDEESSQPHSSSQTDSSKPGSLPQSSDPSKIDNRREKSLGLLTQNFIKLFICSEAIRIISLDDAAKLLLGDAHNTSIMRTKVRRLYDIANVLSSMNLIEKTHTLDSRKPAFKWLGYNGEPTFTLSSDLLQLESRKRAFGTDITNVNVKRSKSSSSSQENATERRLKMKKHSTPESSYNKSFDVHESRHGSRGGYHFGPFAPGTGTYPTAGLEDNSRRAFDVENLDSDYRPSYQNQVLKDLFSHYMDAWKTWFSEVTQENPLPNTSQHR</sequence>
<gene>
    <name type="primary">E2FE</name>
    <name type="synonym">DEL1</name>
    <name type="synonym">E2L3</name>
    <name type="synonym">ELP2</name>
    <name type="ordered locus">At3g48160</name>
    <name type="ORF">T24C20.40</name>
</gene>
<keyword id="KW-0025">Alternative splicing</keyword>
<keyword id="KW-0131">Cell cycle</keyword>
<keyword id="KW-0238">DNA-binding</keyword>
<keyword id="KW-0539">Nucleus</keyword>
<keyword id="KW-1185">Reference proteome</keyword>
<keyword id="KW-0678">Repressor</keyword>
<keyword id="KW-0804">Transcription</keyword>
<keyword id="KW-0805">Transcription regulation</keyword>
<comment type="function">
    <text evidence="2 3 4 5">Inhibitor of E2F-dependent activation of gene expression. Binds specifically the E2 recognition site without interacting with DP proteins and prevents transcription activation by E2F/DP heterodimers. Controls the timing of endocycle onset and inhibits endoreduplication.</text>
</comment>
<comment type="interaction">
    <interactant intactId="EBI-2651542">
        <id>Q8LSZ4</id>
    </interactant>
    <interactant intactId="EBI-1998580">
        <id>Q8VZI9</id>
        <label>ENAP1</label>
    </interactant>
    <organismsDiffer>false</organismsDiffer>
    <experiments>3</experiments>
</comment>
<comment type="subcellular location">
    <subcellularLocation>
        <location evidence="3">Nucleus</location>
    </subcellularLocation>
</comment>
<comment type="alternative products">
    <event type="alternative splicing"/>
    <isoform>
        <id>Q8LSZ4-1</id>
        <name>1</name>
        <sequence type="displayed"/>
    </isoform>
    <isoform>
        <id>Q8LSZ4-2</id>
        <name>2</name>
        <sequence type="described" ref="VSP_040805 VSP_040806"/>
    </isoform>
    <text>Named isoforms=2.</text>
</comment>
<comment type="tissue specificity">
    <text evidence="3 4">Expressed exclusively in mitotically dividing cells. Highly expressed in young leaves and mature flowers. Lower expression in young stalk and in young and mature flowers.</text>
</comment>
<comment type="developmental stage">
    <text evidence="2 5">Expressed in a cell cycle-dependent manner. Not detected during early S phase. Expressed at both the G1/S and S/G2 transitions, with a peak during G2.</text>
</comment>
<comment type="disruption phenotype">
    <text evidence="4">No visible phenotype, but increased ploidy levels.</text>
</comment>
<comment type="similarity">
    <text evidence="7">Belongs to the E2F/DP family.</text>
</comment>
<comment type="sequence caution" evidence="7">
    <conflict type="erroneous initiation">
        <sequence resource="EMBL-CDS" id="CAB51063"/>
    </conflict>
    <text>Truncated N-terminus.</text>
</comment>
<feature type="chain" id="PRO_0000406293" description="E2F transcription factor-like E2FE">
    <location>
        <begin position="1"/>
        <end position="403"/>
    </location>
</feature>
<feature type="DNA-binding region">
    <location>
        <begin position="34"/>
        <end position="99"/>
    </location>
</feature>
<feature type="DNA-binding region">
    <location>
        <begin position="169"/>
        <end position="250"/>
    </location>
</feature>
<feature type="region of interest" description="Disordered" evidence="1">
    <location>
        <begin position="128"/>
        <end position="167"/>
    </location>
</feature>
<feature type="region of interest" description="Disordered" evidence="1">
    <location>
        <begin position="282"/>
        <end position="319"/>
    </location>
</feature>
<feature type="compositionally biased region" description="Low complexity" evidence="1">
    <location>
        <begin position="142"/>
        <end position="152"/>
    </location>
</feature>
<feature type="compositionally biased region" description="Polar residues" evidence="1">
    <location>
        <begin position="153"/>
        <end position="163"/>
    </location>
</feature>
<feature type="splice variant" id="VSP_040805" description="In isoform 2." evidence="6">
    <original>VLKDLFSHY</original>
    <variation>GAYILFTSI</variation>
    <location>
        <begin position="371"/>
        <end position="379"/>
    </location>
</feature>
<feature type="splice variant" id="VSP_040806" description="In isoform 2." evidence="6">
    <location>
        <begin position="380"/>
        <end position="403"/>
    </location>
</feature>
<proteinExistence type="evidence at protein level"/>
<protein>
    <recommendedName>
        <fullName>E2F transcription factor-like E2FE</fullName>
    </recommendedName>
    <alternativeName>
        <fullName>DP-E2F-like protein 1</fullName>
    </alternativeName>
    <alternativeName>
        <fullName>E2F-like repressor E2L3</fullName>
    </alternativeName>
</protein>
<reference key="1">
    <citation type="journal article" date="2002" name="J. Biol. Chem.">
        <title>The E2F family of transcription factors from Arabidopsis thaliana. Novel and conserved components of the retinoblastoma/E2F pathway in plants.</title>
        <authorList>
            <person name="Mariconti L."/>
            <person name="Pellegrini B."/>
            <person name="Cantoni R."/>
            <person name="Stevens R."/>
            <person name="Bergounioux C."/>
            <person name="Cella R."/>
            <person name="Albani D."/>
        </authorList>
    </citation>
    <scope>NUCLEOTIDE SEQUENCE [MRNA] (ISOFORM 2)</scope>
    <scope>FUNCTION</scope>
    <scope>DEVELOPMENTAL STAGE</scope>
    <scope>GENE FAMILY</scope>
    <scope>NOMENCLATURE</scope>
</reference>
<reference key="2">
    <citation type="journal article" date="2002" name="J. Biol. Chem.">
        <title>E2Ls, E2F-like repressors of Arabidopsis that bind to E2F sites in a monomeric form.</title>
        <authorList>
            <person name="Kosugi S."/>
            <person name="Ohashi Y."/>
        </authorList>
    </citation>
    <scope>NUCLEOTIDE SEQUENCE [MRNA] (ISOFORM 1)</scope>
    <scope>FUNCTION</scope>
    <scope>SUBCELLULAR LOCATION</scope>
    <scope>TISSUE SPECIFICITY</scope>
</reference>
<reference key="3">
    <citation type="journal article" date="2000" name="Nature">
        <title>Sequence and analysis of chromosome 3 of the plant Arabidopsis thaliana.</title>
        <authorList>
            <person name="Salanoubat M."/>
            <person name="Lemcke K."/>
            <person name="Rieger M."/>
            <person name="Ansorge W."/>
            <person name="Unseld M."/>
            <person name="Fartmann B."/>
            <person name="Valle G."/>
            <person name="Bloecker H."/>
            <person name="Perez-Alonso M."/>
            <person name="Obermaier B."/>
            <person name="Delseny M."/>
            <person name="Boutry M."/>
            <person name="Grivell L.A."/>
            <person name="Mache R."/>
            <person name="Puigdomenech P."/>
            <person name="De Simone V."/>
            <person name="Choisne N."/>
            <person name="Artiguenave F."/>
            <person name="Robert C."/>
            <person name="Brottier P."/>
            <person name="Wincker P."/>
            <person name="Cattolico L."/>
            <person name="Weissenbach J."/>
            <person name="Saurin W."/>
            <person name="Quetier F."/>
            <person name="Schaefer M."/>
            <person name="Mueller-Auer S."/>
            <person name="Gabel C."/>
            <person name="Fuchs M."/>
            <person name="Benes V."/>
            <person name="Wurmbach E."/>
            <person name="Drzonek H."/>
            <person name="Erfle H."/>
            <person name="Jordan N."/>
            <person name="Bangert S."/>
            <person name="Wiedelmann R."/>
            <person name="Kranz H."/>
            <person name="Voss H."/>
            <person name="Holland R."/>
            <person name="Brandt P."/>
            <person name="Nyakatura G."/>
            <person name="Vezzi A."/>
            <person name="D'Angelo M."/>
            <person name="Pallavicini A."/>
            <person name="Toppo S."/>
            <person name="Simionati B."/>
            <person name="Conrad A."/>
            <person name="Hornischer K."/>
            <person name="Kauer G."/>
            <person name="Loehnert T.-H."/>
            <person name="Nordsiek G."/>
            <person name="Reichelt J."/>
            <person name="Scharfe M."/>
            <person name="Schoen O."/>
            <person name="Bargues M."/>
            <person name="Terol J."/>
            <person name="Climent J."/>
            <person name="Navarro P."/>
            <person name="Collado C."/>
            <person name="Perez-Perez A."/>
            <person name="Ottenwaelder B."/>
            <person name="Duchemin D."/>
            <person name="Cooke R."/>
            <person name="Laudie M."/>
            <person name="Berger-Llauro C."/>
            <person name="Purnelle B."/>
            <person name="Masuy D."/>
            <person name="de Haan M."/>
            <person name="Maarse A.C."/>
            <person name="Alcaraz J.-P."/>
            <person name="Cottet A."/>
            <person name="Casacuberta E."/>
            <person name="Monfort A."/>
            <person name="Argiriou A."/>
            <person name="Flores M."/>
            <person name="Liguori R."/>
            <person name="Vitale D."/>
            <person name="Mannhaupt G."/>
            <person name="Haase D."/>
            <person name="Schoof H."/>
            <person name="Rudd S."/>
            <person name="Zaccaria P."/>
            <person name="Mewes H.-W."/>
            <person name="Mayer K.F.X."/>
            <person name="Kaul S."/>
            <person name="Town C.D."/>
            <person name="Koo H.L."/>
            <person name="Tallon L.J."/>
            <person name="Jenkins J."/>
            <person name="Rooney T."/>
            <person name="Rizzo M."/>
            <person name="Walts A."/>
            <person name="Utterback T."/>
            <person name="Fujii C.Y."/>
            <person name="Shea T.P."/>
            <person name="Creasy T.H."/>
            <person name="Haas B."/>
            <person name="Maiti R."/>
            <person name="Wu D."/>
            <person name="Peterson J."/>
            <person name="Van Aken S."/>
            <person name="Pai G."/>
            <person name="Militscher J."/>
            <person name="Sellers P."/>
            <person name="Gill J.E."/>
            <person name="Feldblyum T.V."/>
            <person name="Preuss D."/>
            <person name="Lin X."/>
            <person name="Nierman W.C."/>
            <person name="Salzberg S.L."/>
            <person name="White O."/>
            <person name="Venter J.C."/>
            <person name="Fraser C.M."/>
            <person name="Kaneko T."/>
            <person name="Nakamura Y."/>
            <person name="Sato S."/>
            <person name="Kato T."/>
            <person name="Asamizu E."/>
            <person name="Sasamoto S."/>
            <person name="Kimura T."/>
            <person name="Idesawa K."/>
            <person name="Kawashima K."/>
            <person name="Kishida Y."/>
            <person name="Kiyokawa C."/>
            <person name="Kohara M."/>
            <person name="Matsumoto M."/>
            <person name="Matsuno A."/>
            <person name="Muraki A."/>
            <person name="Nakayama S."/>
            <person name="Nakazaki N."/>
            <person name="Shinpo S."/>
            <person name="Takeuchi C."/>
            <person name="Wada T."/>
            <person name="Watanabe A."/>
            <person name="Yamada M."/>
            <person name="Yasuda M."/>
            <person name="Tabata S."/>
        </authorList>
    </citation>
    <scope>NUCLEOTIDE SEQUENCE [LARGE SCALE GENOMIC DNA]</scope>
    <source>
        <strain>cv. Columbia</strain>
    </source>
</reference>
<reference key="4">
    <citation type="journal article" date="2017" name="Plant J.">
        <title>Araport11: a complete reannotation of the Arabidopsis thaliana reference genome.</title>
        <authorList>
            <person name="Cheng C.Y."/>
            <person name="Krishnakumar V."/>
            <person name="Chan A.P."/>
            <person name="Thibaud-Nissen F."/>
            <person name="Schobel S."/>
            <person name="Town C.D."/>
        </authorList>
    </citation>
    <scope>GENOME REANNOTATION</scope>
    <source>
        <strain>cv. Columbia</strain>
    </source>
</reference>
<reference key="5">
    <citation type="journal article" date="2003" name="Science">
        <title>Empirical analysis of transcriptional activity in the Arabidopsis genome.</title>
        <authorList>
            <person name="Yamada K."/>
            <person name="Lim J."/>
            <person name="Dale J.M."/>
            <person name="Chen H."/>
            <person name="Shinn P."/>
            <person name="Palm C.J."/>
            <person name="Southwick A.M."/>
            <person name="Wu H.C."/>
            <person name="Kim C.J."/>
            <person name="Nguyen M."/>
            <person name="Pham P.K."/>
            <person name="Cheuk R.F."/>
            <person name="Karlin-Newmann G."/>
            <person name="Liu S.X."/>
            <person name="Lam B."/>
            <person name="Sakano H."/>
            <person name="Wu T."/>
            <person name="Yu G."/>
            <person name="Miranda M."/>
            <person name="Quach H.L."/>
            <person name="Tripp M."/>
            <person name="Chang C.H."/>
            <person name="Lee J.M."/>
            <person name="Toriumi M.J."/>
            <person name="Chan M.M."/>
            <person name="Tang C.C."/>
            <person name="Onodera C.S."/>
            <person name="Deng J.M."/>
            <person name="Akiyama K."/>
            <person name="Ansari Y."/>
            <person name="Arakawa T."/>
            <person name="Banh J."/>
            <person name="Banno F."/>
            <person name="Bowser L."/>
            <person name="Brooks S.Y."/>
            <person name="Carninci P."/>
            <person name="Chao Q."/>
            <person name="Choy N."/>
            <person name="Enju A."/>
            <person name="Goldsmith A.D."/>
            <person name="Gurjal M."/>
            <person name="Hansen N.F."/>
            <person name="Hayashizaki Y."/>
            <person name="Johnson-Hopson C."/>
            <person name="Hsuan V.W."/>
            <person name="Iida K."/>
            <person name="Karnes M."/>
            <person name="Khan S."/>
            <person name="Koesema E."/>
            <person name="Ishida J."/>
            <person name="Jiang P.X."/>
            <person name="Jones T."/>
            <person name="Kawai J."/>
            <person name="Kamiya A."/>
            <person name="Meyers C."/>
            <person name="Nakajima M."/>
            <person name="Narusaka M."/>
            <person name="Seki M."/>
            <person name="Sakurai T."/>
            <person name="Satou M."/>
            <person name="Tamse R."/>
            <person name="Vaysberg M."/>
            <person name="Wallender E.K."/>
            <person name="Wong C."/>
            <person name="Yamamura Y."/>
            <person name="Yuan S."/>
            <person name="Shinozaki K."/>
            <person name="Davis R.W."/>
            <person name="Theologis A."/>
            <person name="Ecker J.R."/>
        </authorList>
    </citation>
    <scope>NUCLEOTIDE SEQUENCE [LARGE SCALE MRNA] (ISOFORM 1)</scope>
    <source>
        <strain>cv. Columbia</strain>
    </source>
</reference>
<reference key="6">
    <citation type="journal article" date="2002" name="Plant Cell">
        <title>Genome-wide analysis of core cell cycle genes in Arabidopsis.</title>
        <authorList>
            <person name="Vandepoele K."/>
            <person name="Raes J."/>
            <person name="de Veylder L."/>
            <person name="Rouze P."/>
            <person name="Rombauts S."/>
            <person name="Inze D."/>
        </authorList>
    </citation>
    <scope>GENE FAMILY</scope>
    <scope>NOMENCLATURE</scope>
</reference>
<reference key="7">
    <citation type="journal article" date="2005" name="Curr. Biol.">
        <title>The DP-E2F-like gene DEL1 controls the endocycle in Arabidopsis thaliana.</title>
        <authorList>
            <person name="Vlieghe K."/>
            <person name="Boudolf V."/>
            <person name="Beemster G.T."/>
            <person name="Maes S."/>
            <person name="Magyar Z."/>
            <person name="Atanassova A."/>
            <person name="de Almeida Engler J."/>
            <person name="De Groodt R."/>
            <person name="Inze D."/>
            <person name="De Veylder L."/>
        </authorList>
    </citation>
    <scope>FUNCTION</scope>
    <scope>TISSUE SPECIFICITY</scope>
    <scope>DISRUPTION PHENOTYPE</scope>
</reference>
<reference key="8">
    <citation type="journal article" date="2008" name="Proc. Natl. Acad. Sci. U.S.A.">
        <title>Atypical E2F activity restrains APC/CCCS52A2 function obligatory for endocycle onset.</title>
        <authorList>
            <person name="Lammens T."/>
            <person name="Boudolf V."/>
            <person name="Kheibarshekan L."/>
            <person name="Zalmas L.P."/>
            <person name="Gaamouche T."/>
            <person name="Maes S."/>
            <person name="Vanstraelen M."/>
            <person name="Kondorosi E."/>
            <person name="La Thangue N.B."/>
            <person name="Govaerts W."/>
            <person name="Inze D."/>
            <person name="De Veylder L."/>
        </authorList>
    </citation>
    <scope>FUNCTION</scope>
    <scope>DEVELOPMENTAL STAGE</scope>
</reference>
<organism>
    <name type="scientific">Arabidopsis thaliana</name>
    <name type="common">Mouse-ear cress</name>
    <dbReference type="NCBI Taxonomy" id="3702"/>
    <lineage>
        <taxon>Eukaryota</taxon>
        <taxon>Viridiplantae</taxon>
        <taxon>Streptophyta</taxon>
        <taxon>Embryophyta</taxon>
        <taxon>Tracheophyta</taxon>
        <taxon>Spermatophyta</taxon>
        <taxon>Magnoliopsida</taxon>
        <taxon>eudicotyledons</taxon>
        <taxon>Gunneridae</taxon>
        <taxon>Pentapetalae</taxon>
        <taxon>rosids</taxon>
        <taxon>malvids</taxon>
        <taxon>Brassicales</taxon>
        <taxon>Brassicaceae</taxon>
        <taxon>Camelineae</taxon>
        <taxon>Arabidopsis</taxon>
    </lineage>
</organism>
<dbReference type="EMBL" id="AB074533">
    <property type="protein sequence ID" value="BAB91414.1"/>
    <property type="molecule type" value="mRNA"/>
</dbReference>
<dbReference type="EMBL" id="AJ417836">
    <property type="protein sequence ID" value="CAD10633.1"/>
    <property type="molecule type" value="mRNA"/>
</dbReference>
<dbReference type="EMBL" id="AL096856">
    <property type="protein sequence ID" value="CAB51063.1"/>
    <property type="status" value="ALT_INIT"/>
    <property type="molecule type" value="Genomic_DNA"/>
</dbReference>
<dbReference type="EMBL" id="CP002686">
    <property type="protein sequence ID" value="AEE78374.1"/>
    <property type="molecule type" value="Genomic_DNA"/>
</dbReference>
<dbReference type="EMBL" id="CP002686">
    <property type="protein sequence ID" value="AEE78375.1"/>
    <property type="molecule type" value="Genomic_DNA"/>
</dbReference>
<dbReference type="EMBL" id="BT004258">
    <property type="protein sequence ID" value="AAO42262.1"/>
    <property type="molecule type" value="mRNA"/>
</dbReference>
<dbReference type="EMBL" id="BT005524">
    <property type="protein sequence ID" value="AAO63944.1"/>
    <property type="molecule type" value="mRNA"/>
</dbReference>
<dbReference type="PIR" id="T13005">
    <property type="entry name" value="T13005"/>
</dbReference>
<dbReference type="RefSeq" id="NP_190399.2">
    <molecule id="Q8LSZ4-1"/>
    <property type="nucleotide sequence ID" value="NM_114685.4"/>
</dbReference>
<dbReference type="RefSeq" id="NP_851012.1">
    <molecule id="Q8LSZ4-2"/>
    <property type="nucleotide sequence ID" value="NM_180681.1"/>
</dbReference>
<dbReference type="SMR" id="Q8LSZ4"/>
<dbReference type="BioGRID" id="9290">
    <property type="interactions" value="15"/>
</dbReference>
<dbReference type="FunCoup" id="Q8LSZ4">
    <property type="interactions" value="239"/>
</dbReference>
<dbReference type="IntAct" id="Q8LSZ4">
    <property type="interactions" value="13"/>
</dbReference>
<dbReference type="STRING" id="3702.Q8LSZ4"/>
<dbReference type="GlyGen" id="Q8LSZ4">
    <property type="glycosylation" value="1 site"/>
</dbReference>
<dbReference type="iPTMnet" id="Q8LSZ4"/>
<dbReference type="PaxDb" id="3702-AT3G48160.2"/>
<dbReference type="ProteomicsDB" id="222010">
    <molecule id="Q8LSZ4-1"/>
</dbReference>
<dbReference type="EnsemblPlants" id="AT3G48160.1">
    <molecule id="Q8LSZ4-2"/>
    <property type="protein sequence ID" value="AT3G48160.1"/>
    <property type="gene ID" value="AT3G48160"/>
</dbReference>
<dbReference type="EnsemblPlants" id="AT3G48160.2">
    <molecule id="Q8LSZ4-1"/>
    <property type="protein sequence ID" value="AT3G48160.2"/>
    <property type="gene ID" value="AT3G48160"/>
</dbReference>
<dbReference type="GeneID" id="823971"/>
<dbReference type="Gramene" id="AT3G48160.1">
    <molecule id="Q8LSZ4-2"/>
    <property type="protein sequence ID" value="AT3G48160.1"/>
    <property type="gene ID" value="AT3G48160"/>
</dbReference>
<dbReference type="Gramene" id="AT3G48160.2">
    <molecule id="Q8LSZ4-1"/>
    <property type="protein sequence ID" value="AT3G48160.2"/>
    <property type="gene ID" value="AT3G48160"/>
</dbReference>
<dbReference type="KEGG" id="ath:AT3G48160"/>
<dbReference type="Araport" id="AT3G48160"/>
<dbReference type="TAIR" id="AT3G48160">
    <property type="gene designation" value="DEL1"/>
</dbReference>
<dbReference type="eggNOG" id="KOG2578">
    <property type="taxonomic scope" value="Eukaryota"/>
</dbReference>
<dbReference type="HOGENOM" id="CLU_041969_1_0_1"/>
<dbReference type="InParanoid" id="Q8LSZ4"/>
<dbReference type="OMA" id="HRFYINE"/>
<dbReference type="OrthoDB" id="5318at2759"/>
<dbReference type="PhylomeDB" id="Q8LSZ4"/>
<dbReference type="PRO" id="PR:Q8LSZ4"/>
<dbReference type="Proteomes" id="UP000006548">
    <property type="component" value="Chromosome 3"/>
</dbReference>
<dbReference type="ExpressionAtlas" id="Q8LSZ4">
    <property type="expression patterns" value="baseline and differential"/>
</dbReference>
<dbReference type="GO" id="GO:0005634">
    <property type="term" value="C:nucleus"/>
    <property type="evidence" value="ECO:0000314"/>
    <property type="project" value="TAIR"/>
</dbReference>
<dbReference type="GO" id="GO:0005667">
    <property type="term" value="C:transcription regulator complex"/>
    <property type="evidence" value="ECO:0007669"/>
    <property type="project" value="InterPro"/>
</dbReference>
<dbReference type="GO" id="GO:0003677">
    <property type="term" value="F:DNA binding"/>
    <property type="evidence" value="ECO:0000314"/>
    <property type="project" value="TAIR"/>
</dbReference>
<dbReference type="GO" id="GO:0003700">
    <property type="term" value="F:DNA-binding transcription factor activity"/>
    <property type="evidence" value="ECO:0000250"/>
    <property type="project" value="TAIR"/>
</dbReference>
<dbReference type="GO" id="GO:0000978">
    <property type="term" value="F:RNA polymerase II cis-regulatory region sequence-specific DNA binding"/>
    <property type="evidence" value="ECO:0007669"/>
    <property type="project" value="InterPro"/>
</dbReference>
<dbReference type="GO" id="GO:0042023">
    <property type="term" value="P:DNA endoreduplication"/>
    <property type="evidence" value="ECO:0000315"/>
    <property type="project" value="TAIR"/>
</dbReference>
<dbReference type="GO" id="GO:0032876">
    <property type="term" value="P:negative regulation of DNA endoreduplication"/>
    <property type="evidence" value="ECO:0000316"/>
    <property type="project" value="TAIR"/>
</dbReference>
<dbReference type="GO" id="GO:0006357">
    <property type="term" value="P:regulation of transcription by RNA polymerase II"/>
    <property type="evidence" value="ECO:0007669"/>
    <property type="project" value="InterPro"/>
</dbReference>
<dbReference type="FunFam" id="1.10.10.10:FF:000073">
    <property type="entry name" value="E2F transcription factor 8"/>
    <property type="match status" value="1"/>
</dbReference>
<dbReference type="FunFam" id="1.10.10.10:FF:000295">
    <property type="entry name" value="E2F transcription factor-like E2FE"/>
    <property type="match status" value="1"/>
</dbReference>
<dbReference type="Gene3D" id="1.10.10.10">
    <property type="entry name" value="Winged helix-like DNA-binding domain superfamily/Winged helix DNA-binding domain"/>
    <property type="match status" value="2"/>
</dbReference>
<dbReference type="InterPro" id="IPR015633">
    <property type="entry name" value="E2F"/>
</dbReference>
<dbReference type="InterPro" id="IPR003316">
    <property type="entry name" value="E2F_WHTH_DNA-bd_dom"/>
</dbReference>
<dbReference type="InterPro" id="IPR036388">
    <property type="entry name" value="WH-like_DNA-bd_sf"/>
</dbReference>
<dbReference type="InterPro" id="IPR036390">
    <property type="entry name" value="WH_DNA-bd_sf"/>
</dbReference>
<dbReference type="PANTHER" id="PTHR12081:SF106">
    <property type="entry name" value="E2F TRANSCRIPTION FACTOR-LIKE E2FE"/>
    <property type="match status" value="1"/>
</dbReference>
<dbReference type="PANTHER" id="PTHR12081">
    <property type="entry name" value="TRANSCRIPTION FACTOR E2F"/>
    <property type="match status" value="1"/>
</dbReference>
<dbReference type="Pfam" id="PF02319">
    <property type="entry name" value="E2F_TDP"/>
    <property type="match status" value="2"/>
</dbReference>
<dbReference type="SMART" id="SM01372">
    <property type="entry name" value="E2F_TDP"/>
    <property type="match status" value="2"/>
</dbReference>
<dbReference type="SUPFAM" id="SSF46785">
    <property type="entry name" value="Winged helix' DNA-binding domain"/>
    <property type="match status" value="2"/>
</dbReference>
<evidence type="ECO:0000256" key="1">
    <source>
        <dbReference type="SAM" id="MobiDB-lite"/>
    </source>
</evidence>
<evidence type="ECO:0000269" key="2">
    <source>
    </source>
</evidence>
<evidence type="ECO:0000269" key="3">
    <source>
    </source>
</evidence>
<evidence type="ECO:0000269" key="4">
    <source>
    </source>
</evidence>
<evidence type="ECO:0000269" key="5">
    <source>
    </source>
</evidence>
<evidence type="ECO:0000303" key="6">
    <source>
    </source>
</evidence>
<evidence type="ECO:0000305" key="7"/>
<accession>Q8LSZ4</accession>
<accession>Q8RYD8</accession>
<accession>Q9STS2</accession>
<name>E2FE_ARATH</name>